<sequence length="624" mass="69430">MALWGGRFTQAADTRFKDFNDSLRFDYRLAEQDIVGSIAWSKALLSVNVLSKEEQQKLEFALNELKLEVMEDPHQILHSDAEDIHSWVEQQLIGKVGDLGKKLHTGRSRNDQVATDLKLWCRQQGHQLLLGLDKLQTQMVNVAKQHQATVLPGYTHLQRAQPVTFAHWCLAYVEMFERDYSRLSDALTRLDTCPLGSGALAGTAYPIDREQLAQDLGFRRATRNSLDSVSDRDHVMELMSVASISMLHLSRLAEDMIFYNSGESGFIELADTVTSGSSLMPQKKNPDALELIRGKTGRVYGSLAGMMMTVKALPLAYNKDMQEDKEGLFDALDTWNDCMEMAALCFDGIKVNGERTLEAAKQGYANSTELADYLVAKGIPFREAHHIVGVAVVGAIAQGCALEELSLEQLQSFSPVIEADVYQILTIESCLEKRSALGGVSPKQVAYAVEQADKRLAARDTTLVKVRPARITDIETLESMVAYWANLGENLPRTRSEIIRDIGLFAVSEHQGLVTGCASLYIYDSGLAEIRSLGIEAGWQRQGQGTAVVQYLIDKAKDMAIKKLFVLTRAPEFFLKQNFVQTSKSLLPEKVLKDCDQCPRQHACDEVALEFNLSEQIISQVKVA</sequence>
<comment type="catalytic activity">
    <reaction>
        <text>2-(N(omega)-L-arginino)succinate = fumarate + L-arginine</text>
        <dbReference type="Rhea" id="RHEA:24020"/>
        <dbReference type="ChEBI" id="CHEBI:29806"/>
        <dbReference type="ChEBI" id="CHEBI:32682"/>
        <dbReference type="ChEBI" id="CHEBI:57472"/>
        <dbReference type="EC" id="4.3.2.1"/>
    </reaction>
</comment>
<comment type="pathway">
    <text>Amino-acid biosynthesis; L-arginine biosynthesis; L-arginine from L-ornithine and carbamoyl phosphate: step 3/3.</text>
</comment>
<comment type="subcellular location">
    <subcellularLocation>
        <location evidence="1">Cytoplasm</location>
    </subcellularLocation>
</comment>
<comment type="similarity">
    <text evidence="2">In the N-terminal section; belongs to the lyase 1 family. Argininosuccinate lyase subfamily.</text>
</comment>
<organism>
    <name type="scientific">Vibrio vulnificus (strain YJ016)</name>
    <dbReference type="NCBI Taxonomy" id="196600"/>
    <lineage>
        <taxon>Bacteria</taxon>
        <taxon>Pseudomonadati</taxon>
        <taxon>Pseudomonadota</taxon>
        <taxon>Gammaproteobacteria</taxon>
        <taxon>Vibrionales</taxon>
        <taxon>Vibrionaceae</taxon>
        <taxon>Vibrio</taxon>
    </lineage>
</organism>
<reference key="1">
    <citation type="journal article" date="2003" name="Genome Res.">
        <title>Comparative genome analysis of Vibrio vulnificus, a marine pathogen.</title>
        <authorList>
            <person name="Chen C.-Y."/>
            <person name="Wu K.-M."/>
            <person name="Chang Y.-C."/>
            <person name="Chang C.-H."/>
            <person name="Tsai H.-C."/>
            <person name="Liao T.-L."/>
            <person name="Liu Y.-M."/>
            <person name="Chen H.-J."/>
            <person name="Shen A.B.-T."/>
            <person name="Li J.-C."/>
            <person name="Su T.-L."/>
            <person name="Shao C.-P."/>
            <person name="Lee C.-T."/>
            <person name="Hor L.-I."/>
            <person name="Tsai S.-F."/>
        </authorList>
    </citation>
    <scope>NUCLEOTIDE SEQUENCE [LARGE SCALE GENOMIC DNA]</scope>
    <source>
        <strain>YJ016</strain>
    </source>
</reference>
<gene>
    <name type="primary">argH</name>
    <name type="ordered locus">VV2999</name>
</gene>
<feature type="chain" id="PRO_0000137849" description="Bifunctional protein ArgH">
    <location>
        <begin position="1"/>
        <end position="624"/>
    </location>
</feature>
<feature type="domain" description="N-acetyltransferase">
    <location>
        <begin position="464"/>
        <end position="614"/>
    </location>
</feature>
<feature type="region of interest" description="Argininosuccinate lyase">
    <location>
        <begin position="1"/>
        <end position="466"/>
    </location>
</feature>
<feature type="region of interest" description="Probable acetyltransferase">
    <location>
        <begin position="467"/>
        <end position="624"/>
    </location>
</feature>
<name>ARLY_VIBVY</name>
<accession>Q7MH73</accession>
<protein>
    <recommendedName>
        <fullName>Bifunctional protein ArgH</fullName>
    </recommendedName>
    <domain>
        <recommendedName>
            <fullName>Argininosuccinate lyase</fullName>
            <shortName>ASAL</shortName>
            <ecNumber>4.3.2.1</ecNumber>
        </recommendedName>
        <alternativeName>
            <fullName>Arginosuccinase</fullName>
        </alternativeName>
    </domain>
    <domain>
        <recommendedName>
            <fullName>Probable acetyltransferase</fullName>
            <ecNumber>2.3.1.-</ecNumber>
        </recommendedName>
    </domain>
</protein>
<proteinExistence type="inferred from homology"/>
<dbReference type="EC" id="4.3.2.1"/>
<dbReference type="EC" id="2.3.1.-"/>
<dbReference type="EMBL" id="BA000037">
    <property type="protein sequence ID" value="BAC95763.1"/>
    <property type="molecule type" value="Genomic_DNA"/>
</dbReference>
<dbReference type="RefSeq" id="WP_011079348.1">
    <property type="nucleotide sequence ID" value="NC_005139.1"/>
</dbReference>
<dbReference type="SMR" id="Q7MH73"/>
<dbReference type="STRING" id="672.VV93_v1c27270"/>
<dbReference type="KEGG" id="vvy:VV2999"/>
<dbReference type="eggNOG" id="COG0165">
    <property type="taxonomic scope" value="Bacteria"/>
</dbReference>
<dbReference type="eggNOG" id="COG1246">
    <property type="taxonomic scope" value="Bacteria"/>
</dbReference>
<dbReference type="HOGENOM" id="CLU_027272_2_3_6"/>
<dbReference type="UniPathway" id="UPA00068">
    <property type="reaction ID" value="UER00114"/>
</dbReference>
<dbReference type="Proteomes" id="UP000002675">
    <property type="component" value="Chromosome I"/>
</dbReference>
<dbReference type="GO" id="GO:0005829">
    <property type="term" value="C:cytosol"/>
    <property type="evidence" value="ECO:0007669"/>
    <property type="project" value="TreeGrafter"/>
</dbReference>
<dbReference type="GO" id="GO:0016747">
    <property type="term" value="F:acyltransferase activity, transferring groups other than amino-acyl groups"/>
    <property type="evidence" value="ECO:0007669"/>
    <property type="project" value="InterPro"/>
</dbReference>
<dbReference type="GO" id="GO:0004056">
    <property type="term" value="F:argininosuccinate lyase activity"/>
    <property type="evidence" value="ECO:0007669"/>
    <property type="project" value="UniProtKB-UniRule"/>
</dbReference>
<dbReference type="GO" id="GO:0042450">
    <property type="term" value="P:arginine biosynthetic process via ornithine"/>
    <property type="evidence" value="ECO:0007669"/>
    <property type="project" value="InterPro"/>
</dbReference>
<dbReference type="GO" id="GO:0006526">
    <property type="term" value="P:L-arginine biosynthetic process"/>
    <property type="evidence" value="ECO:0007669"/>
    <property type="project" value="UniProtKB-UniRule"/>
</dbReference>
<dbReference type="CDD" id="cd01359">
    <property type="entry name" value="Argininosuccinate_lyase"/>
    <property type="match status" value="1"/>
</dbReference>
<dbReference type="CDD" id="cd04301">
    <property type="entry name" value="NAT_SF"/>
    <property type="match status" value="1"/>
</dbReference>
<dbReference type="FunFam" id="1.10.40.30:FF:000001">
    <property type="entry name" value="Argininosuccinate lyase"/>
    <property type="match status" value="1"/>
</dbReference>
<dbReference type="FunFam" id="1.20.200.10:FF:000006">
    <property type="entry name" value="Argininosuccinate lyase"/>
    <property type="match status" value="1"/>
</dbReference>
<dbReference type="Gene3D" id="3.40.630.30">
    <property type="match status" value="1"/>
</dbReference>
<dbReference type="Gene3D" id="1.10.40.30">
    <property type="entry name" value="Fumarase/aspartase (C-terminal domain)"/>
    <property type="match status" value="1"/>
</dbReference>
<dbReference type="Gene3D" id="1.20.200.10">
    <property type="entry name" value="Fumarase/aspartase (Central domain)"/>
    <property type="match status" value="1"/>
</dbReference>
<dbReference type="Gene3D" id="1.10.275.10">
    <property type="entry name" value="Fumarase/aspartase (N-terminal domain)"/>
    <property type="match status" value="1"/>
</dbReference>
<dbReference type="HAMAP" id="MF_00006">
    <property type="entry name" value="Arg_succ_lyase"/>
    <property type="match status" value="1"/>
</dbReference>
<dbReference type="InterPro" id="IPR016181">
    <property type="entry name" value="Acyl_CoA_acyltransferase"/>
</dbReference>
<dbReference type="InterPro" id="IPR029419">
    <property type="entry name" value="Arg_succ_lyase_C"/>
</dbReference>
<dbReference type="InterPro" id="IPR009049">
    <property type="entry name" value="Argininosuccinate_lyase"/>
</dbReference>
<dbReference type="InterPro" id="IPR011244">
    <property type="entry name" value="ASAL_AGS_AcTrfase"/>
</dbReference>
<dbReference type="InterPro" id="IPR024083">
    <property type="entry name" value="Fumarase/histidase_N"/>
</dbReference>
<dbReference type="InterPro" id="IPR020557">
    <property type="entry name" value="Fumarate_lyase_CS"/>
</dbReference>
<dbReference type="InterPro" id="IPR000362">
    <property type="entry name" value="Fumarate_lyase_fam"/>
</dbReference>
<dbReference type="InterPro" id="IPR022761">
    <property type="entry name" value="Fumarate_lyase_N"/>
</dbReference>
<dbReference type="InterPro" id="IPR000182">
    <property type="entry name" value="GNAT_dom"/>
</dbReference>
<dbReference type="InterPro" id="IPR008948">
    <property type="entry name" value="L-Aspartase-like"/>
</dbReference>
<dbReference type="NCBIfam" id="TIGR00838">
    <property type="entry name" value="argH"/>
    <property type="match status" value="1"/>
</dbReference>
<dbReference type="NCBIfam" id="NF008964">
    <property type="entry name" value="PRK12308.1"/>
    <property type="match status" value="1"/>
</dbReference>
<dbReference type="PANTHER" id="PTHR43814">
    <property type="entry name" value="ARGININOSUCCINATE LYASE"/>
    <property type="match status" value="1"/>
</dbReference>
<dbReference type="PANTHER" id="PTHR43814:SF1">
    <property type="entry name" value="ARGININOSUCCINATE LYASE"/>
    <property type="match status" value="1"/>
</dbReference>
<dbReference type="Pfam" id="PF00583">
    <property type="entry name" value="Acetyltransf_1"/>
    <property type="match status" value="1"/>
</dbReference>
<dbReference type="Pfam" id="PF14698">
    <property type="entry name" value="ASL_C2"/>
    <property type="match status" value="1"/>
</dbReference>
<dbReference type="Pfam" id="PF00206">
    <property type="entry name" value="Lyase_1"/>
    <property type="match status" value="1"/>
</dbReference>
<dbReference type="PIRSF" id="PIRSF036456">
    <property type="entry name" value="ASAL_AGS"/>
    <property type="match status" value="1"/>
</dbReference>
<dbReference type="PRINTS" id="PR00145">
    <property type="entry name" value="ARGSUCLYASE"/>
</dbReference>
<dbReference type="PRINTS" id="PR00149">
    <property type="entry name" value="FUMRATELYASE"/>
</dbReference>
<dbReference type="SUPFAM" id="SSF55729">
    <property type="entry name" value="Acyl-CoA N-acyltransferases (Nat)"/>
    <property type="match status" value="1"/>
</dbReference>
<dbReference type="SUPFAM" id="SSF48557">
    <property type="entry name" value="L-aspartase-like"/>
    <property type="match status" value="1"/>
</dbReference>
<dbReference type="PROSITE" id="PS00163">
    <property type="entry name" value="FUMARATE_LYASES"/>
    <property type="match status" value="1"/>
</dbReference>
<dbReference type="PROSITE" id="PS51186">
    <property type="entry name" value="GNAT"/>
    <property type="match status" value="1"/>
</dbReference>
<keyword id="KW-0012">Acyltransferase</keyword>
<keyword id="KW-0028">Amino-acid biosynthesis</keyword>
<keyword id="KW-0055">Arginine biosynthesis</keyword>
<keyword id="KW-0963">Cytoplasm</keyword>
<keyword id="KW-0456">Lyase</keyword>
<keyword id="KW-0511">Multifunctional enzyme</keyword>
<keyword id="KW-0808">Transferase</keyword>
<evidence type="ECO:0000250" key="1"/>
<evidence type="ECO:0000305" key="2"/>